<evidence type="ECO:0000250" key="1"/>
<evidence type="ECO:0000255" key="2">
    <source>
        <dbReference type="PROSITE-ProRule" id="PRU00037"/>
    </source>
</evidence>
<evidence type="ECO:0000255" key="3">
    <source>
        <dbReference type="PROSITE-ProRule" id="PRU00129"/>
    </source>
</evidence>
<evidence type="ECO:0000303" key="4">
    <source>
    </source>
</evidence>
<evidence type="ECO:0000303" key="5">
    <source>
    </source>
</evidence>
<evidence type="ECO:0000305" key="6"/>
<reference key="1">
    <citation type="journal article" date="2005" name="Science">
        <title>The transcriptional landscape of the mammalian genome.</title>
        <authorList>
            <person name="Carninci P."/>
            <person name="Kasukawa T."/>
            <person name="Katayama S."/>
            <person name="Gough J."/>
            <person name="Frith M.C."/>
            <person name="Maeda N."/>
            <person name="Oyama R."/>
            <person name="Ravasi T."/>
            <person name="Lenhard B."/>
            <person name="Wells C."/>
            <person name="Kodzius R."/>
            <person name="Shimokawa K."/>
            <person name="Bajic V.B."/>
            <person name="Brenner S.E."/>
            <person name="Batalov S."/>
            <person name="Forrest A.R."/>
            <person name="Zavolan M."/>
            <person name="Davis M.J."/>
            <person name="Wilming L.G."/>
            <person name="Aidinis V."/>
            <person name="Allen J.E."/>
            <person name="Ambesi-Impiombato A."/>
            <person name="Apweiler R."/>
            <person name="Aturaliya R.N."/>
            <person name="Bailey T.L."/>
            <person name="Bansal M."/>
            <person name="Baxter L."/>
            <person name="Beisel K.W."/>
            <person name="Bersano T."/>
            <person name="Bono H."/>
            <person name="Chalk A.M."/>
            <person name="Chiu K.P."/>
            <person name="Choudhary V."/>
            <person name="Christoffels A."/>
            <person name="Clutterbuck D.R."/>
            <person name="Crowe M.L."/>
            <person name="Dalla E."/>
            <person name="Dalrymple B.P."/>
            <person name="de Bono B."/>
            <person name="Della Gatta G."/>
            <person name="di Bernardo D."/>
            <person name="Down T."/>
            <person name="Engstrom P."/>
            <person name="Fagiolini M."/>
            <person name="Faulkner G."/>
            <person name="Fletcher C.F."/>
            <person name="Fukushima T."/>
            <person name="Furuno M."/>
            <person name="Futaki S."/>
            <person name="Gariboldi M."/>
            <person name="Georgii-Hemming P."/>
            <person name="Gingeras T.R."/>
            <person name="Gojobori T."/>
            <person name="Green R.E."/>
            <person name="Gustincich S."/>
            <person name="Harbers M."/>
            <person name="Hayashi Y."/>
            <person name="Hensch T.K."/>
            <person name="Hirokawa N."/>
            <person name="Hill D."/>
            <person name="Huminiecki L."/>
            <person name="Iacono M."/>
            <person name="Ikeo K."/>
            <person name="Iwama A."/>
            <person name="Ishikawa T."/>
            <person name="Jakt M."/>
            <person name="Kanapin A."/>
            <person name="Katoh M."/>
            <person name="Kawasawa Y."/>
            <person name="Kelso J."/>
            <person name="Kitamura H."/>
            <person name="Kitano H."/>
            <person name="Kollias G."/>
            <person name="Krishnan S.P."/>
            <person name="Kruger A."/>
            <person name="Kummerfeld S.K."/>
            <person name="Kurochkin I.V."/>
            <person name="Lareau L.F."/>
            <person name="Lazarevic D."/>
            <person name="Lipovich L."/>
            <person name="Liu J."/>
            <person name="Liuni S."/>
            <person name="McWilliam S."/>
            <person name="Madan Babu M."/>
            <person name="Madera M."/>
            <person name="Marchionni L."/>
            <person name="Matsuda H."/>
            <person name="Matsuzawa S."/>
            <person name="Miki H."/>
            <person name="Mignone F."/>
            <person name="Miyake S."/>
            <person name="Morris K."/>
            <person name="Mottagui-Tabar S."/>
            <person name="Mulder N."/>
            <person name="Nakano N."/>
            <person name="Nakauchi H."/>
            <person name="Ng P."/>
            <person name="Nilsson R."/>
            <person name="Nishiguchi S."/>
            <person name="Nishikawa S."/>
            <person name="Nori F."/>
            <person name="Ohara O."/>
            <person name="Okazaki Y."/>
            <person name="Orlando V."/>
            <person name="Pang K.C."/>
            <person name="Pavan W.J."/>
            <person name="Pavesi G."/>
            <person name="Pesole G."/>
            <person name="Petrovsky N."/>
            <person name="Piazza S."/>
            <person name="Reed J."/>
            <person name="Reid J.F."/>
            <person name="Ring B.Z."/>
            <person name="Ringwald M."/>
            <person name="Rost B."/>
            <person name="Ruan Y."/>
            <person name="Salzberg S.L."/>
            <person name="Sandelin A."/>
            <person name="Schneider C."/>
            <person name="Schoenbach C."/>
            <person name="Sekiguchi K."/>
            <person name="Semple C.A."/>
            <person name="Seno S."/>
            <person name="Sessa L."/>
            <person name="Sheng Y."/>
            <person name="Shibata Y."/>
            <person name="Shimada H."/>
            <person name="Shimada K."/>
            <person name="Silva D."/>
            <person name="Sinclair B."/>
            <person name="Sperling S."/>
            <person name="Stupka E."/>
            <person name="Sugiura K."/>
            <person name="Sultana R."/>
            <person name="Takenaka Y."/>
            <person name="Taki K."/>
            <person name="Tammoja K."/>
            <person name="Tan S.L."/>
            <person name="Tang S."/>
            <person name="Taylor M.S."/>
            <person name="Tegner J."/>
            <person name="Teichmann S.A."/>
            <person name="Ueda H.R."/>
            <person name="van Nimwegen E."/>
            <person name="Verardo R."/>
            <person name="Wei C.L."/>
            <person name="Yagi K."/>
            <person name="Yamanishi H."/>
            <person name="Zabarovsky E."/>
            <person name="Zhu S."/>
            <person name="Zimmer A."/>
            <person name="Hide W."/>
            <person name="Bult C."/>
            <person name="Grimmond S.M."/>
            <person name="Teasdale R.D."/>
            <person name="Liu E.T."/>
            <person name="Brusic V."/>
            <person name="Quackenbush J."/>
            <person name="Wahlestedt C."/>
            <person name="Mattick J.S."/>
            <person name="Hume D.A."/>
            <person name="Kai C."/>
            <person name="Sasaki D."/>
            <person name="Tomaru Y."/>
            <person name="Fukuda S."/>
            <person name="Kanamori-Katayama M."/>
            <person name="Suzuki M."/>
            <person name="Aoki J."/>
            <person name="Arakawa T."/>
            <person name="Iida J."/>
            <person name="Imamura K."/>
            <person name="Itoh M."/>
            <person name="Kato T."/>
            <person name="Kawaji H."/>
            <person name="Kawagashira N."/>
            <person name="Kawashima T."/>
            <person name="Kojima M."/>
            <person name="Kondo S."/>
            <person name="Konno H."/>
            <person name="Nakano K."/>
            <person name="Ninomiya N."/>
            <person name="Nishio T."/>
            <person name="Okada M."/>
            <person name="Plessy C."/>
            <person name="Shibata K."/>
            <person name="Shiraki T."/>
            <person name="Suzuki S."/>
            <person name="Tagami M."/>
            <person name="Waki K."/>
            <person name="Watahiki A."/>
            <person name="Okamura-Oho Y."/>
            <person name="Suzuki H."/>
            <person name="Kawai J."/>
            <person name="Hayashizaki Y."/>
        </authorList>
    </citation>
    <scope>NUCLEOTIDE SEQUENCE [LARGE SCALE MRNA] (ISOFORM 2)</scope>
    <source>
        <strain>C57BL/6J</strain>
        <tissue>Ovary</tissue>
    </source>
</reference>
<reference key="2">
    <citation type="journal article" date="2009" name="PLoS Biol.">
        <title>Lineage-specific biology revealed by a finished genome assembly of the mouse.</title>
        <authorList>
            <person name="Church D.M."/>
            <person name="Goodstadt L."/>
            <person name="Hillier L.W."/>
            <person name="Zody M.C."/>
            <person name="Goldstein S."/>
            <person name="She X."/>
            <person name="Bult C.J."/>
            <person name="Agarwala R."/>
            <person name="Cherry J.L."/>
            <person name="DiCuccio M."/>
            <person name="Hlavina W."/>
            <person name="Kapustin Y."/>
            <person name="Meric P."/>
            <person name="Maglott D."/>
            <person name="Birtle Z."/>
            <person name="Marques A.C."/>
            <person name="Graves T."/>
            <person name="Zhou S."/>
            <person name="Teague B."/>
            <person name="Potamousis K."/>
            <person name="Churas C."/>
            <person name="Place M."/>
            <person name="Herschleb J."/>
            <person name="Runnheim R."/>
            <person name="Forrest D."/>
            <person name="Amos-Landgraf J."/>
            <person name="Schwartz D.C."/>
            <person name="Cheng Z."/>
            <person name="Lindblad-Toh K."/>
            <person name="Eichler E.E."/>
            <person name="Ponting C.P."/>
        </authorList>
    </citation>
    <scope>NUCLEOTIDE SEQUENCE [LARGE SCALE GENOMIC DNA]</scope>
    <source>
        <strain>C57BL/6J</strain>
    </source>
</reference>
<reference key="3">
    <citation type="submission" date="2005-07" db="EMBL/GenBank/DDBJ databases">
        <authorList>
            <person name="Mural R.J."/>
            <person name="Adams M.D."/>
            <person name="Myers E.W."/>
            <person name="Smith H.O."/>
            <person name="Venter J.C."/>
        </authorList>
    </citation>
    <scope>NUCLEOTIDE SEQUENCE [LARGE SCALE GENOMIC DNA]</scope>
</reference>
<reference key="4">
    <citation type="journal article" date="2004" name="Genome Res.">
        <title>The status, quality, and expansion of the NIH full-length cDNA project: the Mammalian Gene Collection (MGC).</title>
        <authorList>
            <consortium name="The MGC Project Team"/>
        </authorList>
    </citation>
    <scope>NUCLEOTIDE SEQUENCE [LARGE SCALE MRNA] (ISOFORM 2)</scope>
</reference>
<reference key="5">
    <citation type="journal article" date="2006" name="Dev. Cell">
        <title>A hedgehog-induced BTB protein modulates hedgehog signaling by degrading Ci/Gli transcription factor.</title>
        <authorList>
            <person name="Zhang Q."/>
            <person name="Zhang L."/>
            <person name="Wang B."/>
            <person name="Ou C.-Y."/>
            <person name="Chien C.-T."/>
            <person name="Jiang J."/>
        </authorList>
    </citation>
    <scope>IDENTIFICATION</scope>
</reference>
<dbReference type="EMBL" id="AK162056">
    <property type="protein sequence ID" value="BAE36701.1"/>
    <property type="status" value="ALT_FRAME"/>
    <property type="molecule type" value="mRNA"/>
</dbReference>
<dbReference type="EMBL" id="AL773534">
    <property type="status" value="NOT_ANNOTATED_CDS"/>
    <property type="molecule type" value="Genomic_DNA"/>
</dbReference>
<dbReference type="EMBL" id="CH466542">
    <property type="protein sequence ID" value="EDL08155.1"/>
    <property type="molecule type" value="Genomic_DNA"/>
</dbReference>
<dbReference type="EMBL" id="BC111867">
    <property type="protein sequence ID" value="AAI11868.1"/>
    <property type="status" value="ALT_INIT"/>
    <property type="molecule type" value="mRNA"/>
</dbReference>
<dbReference type="CCDS" id="CCDS15730.1">
    <molecule id="Q2M2N2-1"/>
</dbReference>
<dbReference type="RefSeq" id="NP_001159469.1">
    <molecule id="Q2M2N2-2"/>
    <property type="nucleotide sequence ID" value="NM_001165997.1"/>
</dbReference>
<dbReference type="RefSeq" id="NP_001159470.1">
    <molecule id="Q2M2N2-2"/>
    <property type="nucleotide sequence ID" value="NM_001165998.1"/>
</dbReference>
<dbReference type="RefSeq" id="NP_084049.2">
    <molecule id="Q2M2N2-1"/>
    <property type="nucleotide sequence ID" value="NM_029773.2"/>
</dbReference>
<dbReference type="RefSeq" id="XP_006498477.1">
    <molecule id="Q2M2N2-1"/>
    <property type="nucleotide sequence ID" value="XM_006498414.4"/>
</dbReference>
<dbReference type="RefSeq" id="XP_017174813.1">
    <property type="nucleotide sequence ID" value="XM_017319324.1"/>
</dbReference>
<dbReference type="RefSeq" id="XP_030108055.1">
    <molecule id="Q2M2N2-1"/>
    <property type="nucleotide sequence ID" value="XM_030252195.2"/>
</dbReference>
<dbReference type="RefSeq" id="XP_030108056.1">
    <molecule id="Q2M2N2-2"/>
    <property type="nucleotide sequence ID" value="XM_030252196.2"/>
</dbReference>
<dbReference type="RefSeq" id="XP_036018574.1">
    <molecule id="Q2M2N2-2"/>
    <property type="nucleotide sequence ID" value="XM_036162681.1"/>
</dbReference>
<dbReference type="RefSeq" id="XP_036018575.1">
    <molecule id="Q2M2N2-2"/>
    <property type="nucleotide sequence ID" value="XM_036162682.1"/>
</dbReference>
<dbReference type="RefSeq" id="XP_036018576.1">
    <molecule id="Q2M2N2-2"/>
    <property type="nucleotide sequence ID" value="XM_036162683.1"/>
</dbReference>
<dbReference type="SMR" id="Q2M2N2"/>
<dbReference type="BioGRID" id="218353">
    <property type="interactions" value="23"/>
</dbReference>
<dbReference type="FunCoup" id="Q2M2N2">
    <property type="interactions" value="3051"/>
</dbReference>
<dbReference type="STRING" id="10090.ENSMUSP00000114974"/>
<dbReference type="GlyGen" id="Q2M2N2">
    <property type="glycosylation" value="2 sites, 1 N-linked glycan (1 site)"/>
</dbReference>
<dbReference type="PhosphoSitePlus" id="Q2M2N2"/>
<dbReference type="PaxDb" id="10090-ENSMUSP00000114974"/>
<dbReference type="ProteomicsDB" id="261576">
    <molecule id="Q2M2N2-1"/>
</dbReference>
<dbReference type="Antibodypedia" id="33596">
    <property type="antibodies" value="128 antibodies from 20 providers"/>
</dbReference>
<dbReference type="DNASU" id="76857"/>
<dbReference type="Ensembl" id="ENSMUST00000132484.7">
    <molecule id="Q2M2N2-1"/>
    <property type="protein sequence ID" value="ENSMUSP00000114974.2"/>
    <property type="gene ID" value="ENSMUSG00000026771.15"/>
</dbReference>
<dbReference type="GeneID" id="76857"/>
<dbReference type="KEGG" id="mmu:76857"/>
<dbReference type="UCSC" id="uc008ioh.2">
    <molecule id="Q2M2N2-1"/>
    <property type="organism name" value="mouse"/>
</dbReference>
<dbReference type="UCSC" id="uc008ioi.2">
    <molecule id="Q2M2N2-2"/>
    <property type="organism name" value="mouse"/>
</dbReference>
<dbReference type="AGR" id="MGI:1924107"/>
<dbReference type="CTD" id="339745"/>
<dbReference type="MGI" id="MGI:1924107">
    <property type="gene designation" value="Spopl"/>
</dbReference>
<dbReference type="VEuPathDB" id="HostDB:ENSMUSG00000026771"/>
<dbReference type="eggNOG" id="KOG1987">
    <property type="taxonomic scope" value="Eukaryota"/>
</dbReference>
<dbReference type="GeneTree" id="ENSGT00940000155953"/>
<dbReference type="HOGENOM" id="CLU_004253_2_0_1"/>
<dbReference type="InParanoid" id="Q2M2N2"/>
<dbReference type="OMA" id="GEIFTAH"/>
<dbReference type="OrthoDB" id="6359816at2759"/>
<dbReference type="PhylomeDB" id="Q2M2N2"/>
<dbReference type="TreeFam" id="TF313419"/>
<dbReference type="Reactome" id="R-MMU-5632684">
    <property type="pathway name" value="Hedgehog 'on' state"/>
</dbReference>
<dbReference type="UniPathway" id="UPA00143"/>
<dbReference type="BioGRID-ORCS" id="76857">
    <property type="hits" value="1 hit in 78 CRISPR screens"/>
</dbReference>
<dbReference type="ChiTaRS" id="Spopl">
    <property type="organism name" value="mouse"/>
</dbReference>
<dbReference type="PRO" id="PR:Q2M2N2"/>
<dbReference type="Proteomes" id="UP000000589">
    <property type="component" value="Chromosome 2"/>
</dbReference>
<dbReference type="RNAct" id="Q2M2N2">
    <property type="molecule type" value="protein"/>
</dbReference>
<dbReference type="Bgee" id="ENSMUSG00000026771">
    <property type="expression patterns" value="Expressed in otolith organ and 221 other cell types or tissues"/>
</dbReference>
<dbReference type="ExpressionAtlas" id="Q2M2N2">
    <property type="expression patterns" value="baseline and differential"/>
</dbReference>
<dbReference type="GO" id="GO:0031463">
    <property type="term" value="C:Cul3-RING ubiquitin ligase complex"/>
    <property type="evidence" value="ECO:0000250"/>
    <property type="project" value="UniProtKB"/>
</dbReference>
<dbReference type="GO" id="GO:0005634">
    <property type="term" value="C:nucleus"/>
    <property type="evidence" value="ECO:0007669"/>
    <property type="project" value="UniProtKB-SubCell"/>
</dbReference>
<dbReference type="GO" id="GO:0042802">
    <property type="term" value="F:identical protein binding"/>
    <property type="evidence" value="ECO:0007669"/>
    <property type="project" value="Ensembl"/>
</dbReference>
<dbReference type="GO" id="GO:0031397">
    <property type="term" value="P:negative regulation of protein ubiquitination"/>
    <property type="evidence" value="ECO:0000250"/>
    <property type="project" value="UniProtKB"/>
</dbReference>
<dbReference type="GO" id="GO:0043161">
    <property type="term" value="P:proteasome-mediated ubiquitin-dependent protein catabolic process"/>
    <property type="evidence" value="ECO:0000250"/>
    <property type="project" value="UniProtKB"/>
</dbReference>
<dbReference type="GO" id="GO:0016567">
    <property type="term" value="P:protein ubiquitination"/>
    <property type="evidence" value="ECO:0007669"/>
    <property type="project" value="UniProtKB-UniPathway"/>
</dbReference>
<dbReference type="CDD" id="cd18519">
    <property type="entry name" value="BACK_SPOPL"/>
    <property type="match status" value="1"/>
</dbReference>
<dbReference type="FunFam" id="2.60.210.10:FF:000028">
    <property type="entry name" value="Speckle-type POZ protein-like"/>
    <property type="match status" value="1"/>
</dbReference>
<dbReference type="FunFam" id="3.30.710.10:FF:000008">
    <property type="entry name" value="Speckle-type POZ protein-like a"/>
    <property type="match status" value="1"/>
</dbReference>
<dbReference type="Gene3D" id="6.10.250.3030">
    <property type="match status" value="1"/>
</dbReference>
<dbReference type="Gene3D" id="6.20.250.50">
    <property type="match status" value="1"/>
</dbReference>
<dbReference type="Gene3D" id="2.60.210.10">
    <property type="entry name" value="Apoptosis, Tumor Necrosis Factor Receptor Associated Protein 2, Chain A"/>
    <property type="match status" value="1"/>
</dbReference>
<dbReference type="Gene3D" id="3.30.710.10">
    <property type="entry name" value="Potassium Channel Kv1.1, Chain A"/>
    <property type="match status" value="1"/>
</dbReference>
<dbReference type="InterPro" id="IPR000210">
    <property type="entry name" value="BTB/POZ_dom"/>
</dbReference>
<dbReference type="InterPro" id="IPR002083">
    <property type="entry name" value="MATH/TRAF_dom"/>
</dbReference>
<dbReference type="InterPro" id="IPR011333">
    <property type="entry name" value="SKP1/BTB/POZ_sf"/>
</dbReference>
<dbReference type="InterPro" id="IPR008974">
    <property type="entry name" value="TRAF-like"/>
</dbReference>
<dbReference type="PANTHER" id="PTHR24413">
    <property type="entry name" value="SPECKLE-TYPE POZ PROTEIN"/>
    <property type="match status" value="1"/>
</dbReference>
<dbReference type="Pfam" id="PF00651">
    <property type="entry name" value="BTB"/>
    <property type="match status" value="1"/>
</dbReference>
<dbReference type="Pfam" id="PF22486">
    <property type="entry name" value="MATH_2"/>
    <property type="match status" value="1"/>
</dbReference>
<dbReference type="SMART" id="SM00225">
    <property type="entry name" value="BTB"/>
    <property type="match status" value="1"/>
</dbReference>
<dbReference type="SMART" id="SM00061">
    <property type="entry name" value="MATH"/>
    <property type="match status" value="1"/>
</dbReference>
<dbReference type="SUPFAM" id="SSF54695">
    <property type="entry name" value="POZ domain"/>
    <property type="match status" value="1"/>
</dbReference>
<dbReference type="SUPFAM" id="SSF49599">
    <property type="entry name" value="TRAF domain-like"/>
    <property type="match status" value="1"/>
</dbReference>
<dbReference type="PROSITE" id="PS50097">
    <property type="entry name" value="BTB"/>
    <property type="match status" value="1"/>
</dbReference>
<dbReference type="PROSITE" id="PS50144">
    <property type="entry name" value="MATH"/>
    <property type="match status" value="1"/>
</dbReference>
<sequence length="392" mass="44699">MSREPTPPLPGDMSTSPVAESWCYTQVKVVKFSYMWTINNFSFCREEMGEVLKSSTFSSGPNDKMKWCLRVNPKGLDDESKDYLSLYLLLVSCPKSEVRAKFKFSLLNDKREETKAMESQRAYRFVQGKDWGFKKFIRRDFLLDEANGLLPDDKLTLFCEVSVVQDSVNVSGHTSTNTLKVPECRLAEDLGNLWENTRFTDCCFFVRGKEFKAHKSVLAARSPVFNAMFEHEMEECTKNRVEINDLDPEVFKEMMRFVYTGKAPNLDKMADNLLAAADKYALERLKVMCEEALCSNLSVENVADTLVLADLHSAEQLKAQAIDFINRCSVLRQLGCKDGKNWNNNQATDIMETSGWKSMIQSHPHLVAEAFRALASSQCPQFGIPRKRLKQS</sequence>
<protein>
    <recommendedName>
        <fullName>Speckle-type POZ protein-like</fullName>
    </recommendedName>
    <alternativeName>
        <fullName>HIB homolog 2</fullName>
    </alternativeName>
</protein>
<gene>
    <name type="primary">Spopl</name>
</gene>
<accession>Q2M2N2</accession>
<accession>A2AL52</accession>
<accession>Q3TSH4</accession>
<comment type="function">
    <text evidence="1">Component of a cullin-RING-based BCR (BTB-CUL3-RBX1) E3 ubiquitin-protein ligase complex that mediates the ubiquitination and subsequent proteasomal degradation of target proteins, but with relatively low efficiency. Cullin-RING-based BCR (BTB-CUL3-RBX1) E3 ubiquitin-protein ligase complexes containing homodimeric SPOPL or the heterodimer formed by SPOP and SPOPL are less efficient than ubiquitin ligase complexes containing only SPOP. May function to down-regulate the activity of cullin-RING-based BCR (BTB-CUL3-RBX1) E3 ubiquitin-protein ligase complexes that contain SPOP (By similarity).</text>
</comment>
<comment type="pathway">
    <text>Protein modification; protein ubiquitination.</text>
</comment>
<comment type="subunit">
    <text evidence="1">Homodimer. Heterodimer with SPOP. Component of cullin-RING-based BCR (BTB-CUL3-RBX1) E3 ubiquitin-protein ligase complexes containing homodimeric SPOPL or the heterodimer formed by SPOP and SPOPL. Interacts with CUL3 and MACROH2A1 (By similarity).</text>
</comment>
<comment type="subcellular location">
    <subcellularLocation>
        <location evidence="1">Nucleus</location>
    </subcellularLocation>
</comment>
<comment type="alternative products">
    <event type="alternative splicing"/>
    <isoform>
        <id>Q2M2N2-1</id>
        <name>1</name>
        <sequence type="displayed"/>
    </isoform>
    <isoform>
        <id>Q2M2N2-2</id>
        <name>2</name>
        <sequence type="described" ref="VSP_022824"/>
    </isoform>
</comment>
<comment type="similarity">
    <text evidence="6">Belongs to the Tdpoz family.</text>
</comment>
<comment type="sequence caution" evidence="6">
    <conflict type="erroneous initiation">
        <sequence resource="EMBL-CDS" id="AAI11868"/>
    </conflict>
    <text>Truncated N-terminus.</text>
</comment>
<comment type="sequence caution" evidence="6">
    <conflict type="frameshift">
        <sequence resource="EMBL-CDS" id="BAE36701"/>
    </conflict>
</comment>
<proteinExistence type="evidence at transcript level"/>
<feature type="chain" id="PRO_0000274589" description="Speckle-type POZ protein-like">
    <location>
        <begin position="1"/>
        <end position="392"/>
    </location>
</feature>
<feature type="domain" description="MATH" evidence="3">
    <location>
        <begin position="31"/>
        <end position="161"/>
    </location>
</feature>
<feature type="domain" description="BTB" evidence="2">
    <location>
        <begin position="200"/>
        <end position="267"/>
    </location>
</feature>
<feature type="splice variant" id="VSP_022824" description="In isoform 2." evidence="4 5">
    <original>MSREPTPPLPGDMSTSPVAESWCYTQVKVVKFSYMWTINNFSFCREEMGEVLKSSTFSSGPNDKMKWCLRVNPKGLDDESKDYLSLYLLLVSCPKSEVRAKFKFSLLNDKREETKAMESQRAYRFVQGKDWGFKKFIRRDFLLDEANGLLPDDKLTLFCE</original>
    <variation>MIKGKKQKQWKAKEHIDLYRGRTGDLKNSLEGIFCLMKLMVSFQMTSLRYSVSISNTACRRGGSIALPSLKNWHLPLHCKWCCRQ</variation>
    <location>
        <begin position="1"/>
        <end position="160"/>
    </location>
</feature>
<feature type="sequence conflict" description="In Ref. 1; BAE36701." evidence="6" ref="1">
    <original>C</original>
    <variation>G</variation>
    <location>
        <position position="202"/>
    </location>
</feature>
<keyword id="KW-0025">Alternative splicing</keyword>
<keyword id="KW-0539">Nucleus</keyword>
<keyword id="KW-1185">Reference proteome</keyword>
<keyword id="KW-0833">Ubl conjugation pathway</keyword>
<organism>
    <name type="scientific">Mus musculus</name>
    <name type="common">Mouse</name>
    <dbReference type="NCBI Taxonomy" id="10090"/>
    <lineage>
        <taxon>Eukaryota</taxon>
        <taxon>Metazoa</taxon>
        <taxon>Chordata</taxon>
        <taxon>Craniata</taxon>
        <taxon>Vertebrata</taxon>
        <taxon>Euteleostomi</taxon>
        <taxon>Mammalia</taxon>
        <taxon>Eutheria</taxon>
        <taxon>Euarchontoglires</taxon>
        <taxon>Glires</taxon>
        <taxon>Rodentia</taxon>
        <taxon>Myomorpha</taxon>
        <taxon>Muroidea</taxon>
        <taxon>Muridae</taxon>
        <taxon>Murinae</taxon>
        <taxon>Mus</taxon>
        <taxon>Mus</taxon>
    </lineage>
</organism>
<name>SPOPL_MOUSE</name>